<protein>
    <recommendedName>
        <fullName evidence="1">Large ribosomal subunit protein bL21</fullName>
    </recommendedName>
    <alternativeName>
        <fullName evidence="2">50S ribosomal protein L21</fullName>
    </alternativeName>
</protein>
<feature type="chain" id="PRO_0000269333" description="Large ribosomal subunit protein bL21">
    <location>
        <begin position="1"/>
        <end position="104"/>
    </location>
</feature>
<comment type="function">
    <text evidence="1">This protein binds to 23S rRNA in the presence of protein L20.</text>
</comment>
<comment type="subunit">
    <text evidence="1">Part of the 50S ribosomal subunit. Contacts protein L20.</text>
</comment>
<comment type="similarity">
    <text evidence="1">Belongs to the bacterial ribosomal protein bL21 family.</text>
</comment>
<organism>
    <name type="scientific">Lactococcus lactis subsp. lactis (strain IL1403)</name>
    <name type="common">Streptococcus lactis</name>
    <dbReference type="NCBI Taxonomy" id="272623"/>
    <lineage>
        <taxon>Bacteria</taxon>
        <taxon>Bacillati</taxon>
        <taxon>Bacillota</taxon>
        <taxon>Bacilli</taxon>
        <taxon>Lactobacillales</taxon>
        <taxon>Streptococcaceae</taxon>
        <taxon>Lactococcus</taxon>
    </lineage>
</organism>
<accession>Q9CGL7</accession>
<reference key="1">
    <citation type="journal article" date="2001" name="Genome Res.">
        <title>The complete genome sequence of the lactic acid bacterium Lactococcus lactis ssp. lactis IL1403.</title>
        <authorList>
            <person name="Bolotin A."/>
            <person name="Wincker P."/>
            <person name="Mauger S."/>
            <person name="Jaillon O."/>
            <person name="Malarme K."/>
            <person name="Weissenbach J."/>
            <person name="Ehrlich S.D."/>
            <person name="Sorokin A."/>
        </authorList>
    </citation>
    <scope>NUCLEOTIDE SEQUENCE [LARGE SCALE GENOMIC DNA]</scope>
    <source>
        <strain>IL1403</strain>
    </source>
</reference>
<sequence length="104" mass="11437">MSNYAIIKTGGKQLKVEEGSVIYVEKLNVEAGQTVTFDEVIFVGGETTKVGAPLVEGATVVGEVEKHGKQKKVVTFQYKPKKHSHRKQGHRQPYTKVVIKSVNA</sequence>
<evidence type="ECO:0000255" key="1">
    <source>
        <dbReference type="HAMAP-Rule" id="MF_01363"/>
    </source>
</evidence>
<evidence type="ECO:0000305" key="2"/>
<keyword id="KW-1185">Reference proteome</keyword>
<keyword id="KW-0687">Ribonucleoprotein</keyword>
<keyword id="KW-0689">Ribosomal protein</keyword>
<keyword id="KW-0694">RNA-binding</keyword>
<keyword id="KW-0699">rRNA-binding</keyword>
<name>RL21_LACLA</name>
<dbReference type="EMBL" id="AE005176">
    <property type="protein sequence ID" value="AAK05177.1"/>
    <property type="molecule type" value="Genomic_DNA"/>
</dbReference>
<dbReference type="PIR" id="G86759">
    <property type="entry name" value="G86759"/>
</dbReference>
<dbReference type="RefSeq" id="NP_267235.1">
    <property type="nucleotide sequence ID" value="NC_002662.1"/>
</dbReference>
<dbReference type="RefSeq" id="WP_010905746.1">
    <property type="nucleotide sequence ID" value="NC_002662.1"/>
</dbReference>
<dbReference type="SMR" id="Q9CGL7"/>
<dbReference type="PaxDb" id="272623-L0417"/>
<dbReference type="EnsemblBacteria" id="AAK05177">
    <property type="protein sequence ID" value="AAK05177"/>
    <property type="gene ID" value="L0417"/>
</dbReference>
<dbReference type="KEGG" id="lla:L0417"/>
<dbReference type="PATRIC" id="fig|272623.7.peg.1157"/>
<dbReference type="eggNOG" id="COG0261">
    <property type="taxonomic scope" value="Bacteria"/>
</dbReference>
<dbReference type="HOGENOM" id="CLU_061463_3_1_9"/>
<dbReference type="OrthoDB" id="9813334at2"/>
<dbReference type="Proteomes" id="UP000002196">
    <property type="component" value="Chromosome"/>
</dbReference>
<dbReference type="GO" id="GO:0005737">
    <property type="term" value="C:cytoplasm"/>
    <property type="evidence" value="ECO:0007669"/>
    <property type="project" value="UniProtKB-ARBA"/>
</dbReference>
<dbReference type="GO" id="GO:1990904">
    <property type="term" value="C:ribonucleoprotein complex"/>
    <property type="evidence" value="ECO:0007669"/>
    <property type="project" value="UniProtKB-KW"/>
</dbReference>
<dbReference type="GO" id="GO:0005840">
    <property type="term" value="C:ribosome"/>
    <property type="evidence" value="ECO:0007669"/>
    <property type="project" value="UniProtKB-KW"/>
</dbReference>
<dbReference type="GO" id="GO:0019843">
    <property type="term" value="F:rRNA binding"/>
    <property type="evidence" value="ECO:0007669"/>
    <property type="project" value="UniProtKB-UniRule"/>
</dbReference>
<dbReference type="GO" id="GO:0003735">
    <property type="term" value="F:structural constituent of ribosome"/>
    <property type="evidence" value="ECO:0007669"/>
    <property type="project" value="InterPro"/>
</dbReference>
<dbReference type="GO" id="GO:0006412">
    <property type="term" value="P:translation"/>
    <property type="evidence" value="ECO:0007669"/>
    <property type="project" value="UniProtKB-UniRule"/>
</dbReference>
<dbReference type="HAMAP" id="MF_01363">
    <property type="entry name" value="Ribosomal_bL21"/>
    <property type="match status" value="1"/>
</dbReference>
<dbReference type="InterPro" id="IPR028909">
    <property type="entry name" value="bL21-like"/>
</dbReference>
<dbReference type="InterPro" id="IPR036164">
    <property type="entry name" value="bL21-like_sf"/>
</dbReference>
<dbReference type="InterPro" id="IPR001787">
    <property type="entry name" value="Ribosomal_bL21"/>
</dbReference>
<dbReference type="NCBIfam" id="TIGR00061">
    <property type="entry name" value="L21"/>
    <property type="match status" value="1"/>
</dbReference>
<dbReference type="PANTHER" id="PTHR21349">
    <property type="entry name" value="50S RIBOSOMAL PROTEIN L21"/>
    <property type="match status" value="1"/>
</dbReference>
<dbReference type="PANTHER" id="PTHR21349:SF0">
    <property type="entry name" value="LARGE RIBOSOMAL SUBUNIT PROTEIN BL21M"/>
    <property type="match status" value="1"/>
</dbReference>
<dbReference type="Pfam" id="PF00829">
    <property type="entry name" value="Ribosomal_L21p"/>
    <property type="match status" value="1"/>
</dbReference>
<dbReference type="SUPFAM" id="SSF141091">
    <property type="entry name" value="L21p-like"/>
    <property type="match status" value="1"/>
</dbReference>
<gene>
    <name evidence="1" type="primary">rplU</name>
    <name type="ordered locus">LL1079</name>
    <name type="ORF">L0417</name>
</gene>
<proteinExistence type="inferred from homology"/>